<name>COA6_BOVIN</name>
<evidence type="ECO:0000250" key="1">
    <source>
        <dbReference type="UniProtKB" id="Q5JTJ3"/>
    </source>
</evidence>
<evidence type="ECO:0000255" key="2">
    <source>
        <dbReference type="PROSITE-ProRule" id="PRU01150"/>
    </source>
</evidence>
<evidence type="ECO:0000305" key="3"/>
<feature type="chain" id="PRO_0000420733" description="Cytochrome c oxidase assembly factor 6 homolog">
    <location>
        <begin position="1"/>
        <end position="79"/>
    </location>
</feature>
<feature type="domain" description="CHCH" evidence="2">
    <location>
        <begin position="9"/>
        <end position="52"/>
    </location>
</feature>
<feature type="short sequence motif" description="Cx9C motif" evidence="2">
    <location>
        <begin position="12"/>
        <end position="22"/>
    </location>
</feature>
<feature type="short sequence motif" description="Cx10C motif" evidence="2">
    <location>
        <begin position="33"/>
        <end position="44"/>
    </location>
</feature>
<feature type="disulfide bond" evidence="2">
    <location>
        <begin position="12"/>
        <end position="44"/>
    </location>
</feature>
<feature type="disulfide bond" evidence="2">
    <location>
        <begin position="22"/>
        <end position="33"/>
    </location>
</feature>
<dbReference type="EMBL" id="BC111672">
    <property type="protein sequence ID" value="AAI11673.1"/>
    <property type="molecule type" value="mRNA"/>
</dbReference>
<dbReference type="EMBL" id="BC149749">
    <property type="protein sequence ID" value="AAI49750.1"/>
    <property type="molecule type" value="mRNA"/>
</dbReference>
<dbReference type="RefSeq" id="NP_001193571.1">
    <property type="nucleotide sequence ID" value="NM_001206642.1"/>
</dbReference>
<dbReference type="RefSeq" id="NP_001193572.1">
    <property type="nucleotide sequence ID" value="NM_001206643.1"/>
</dbReference>
<dbReference type="RefSeq" id="NP_001193573.1">
    <property type="nucleotide sequence ID" value="NM_001206644.1"/>
</dbReference>
<dbReference type="RefSeq" id="XP_010818737.1">
    <property type="nucleotide sequence ID" value="XM_010820435.4"/>
</dbReference>
<dbReference type="SMR" id="Q2M2S5"/>
<dbReference type="FunCoup" id="Q2M2S5">
    <property type="interactions" value="1558"/>
</dbReference>
<dbReference type="STRING" id="9913.ENSBTAP00000072286"/>
<dbReference type="GeneID" id="768072"/>
<dbReference type="KEGG" id="bta:768072"/>
<dbReference type="CTD" id="388753"/>
<dbReference type="VEuPathDB" id="HostDB:ENSBTAG00000051467"/>
<dbReference type="InParanoid" id="Q2M2S5"/>
<dbReference type="OMA" id="DAPRCEK"/>
<dbReference type="OrthoDB" id="16284at2759"/>
<dbReference type="Proteomes" id="UP000009136">
    <property type="component" value="Chromosome 28"/>
</dbReference>
<dbReference type="Bgee" id="ENSBTAG00000051467">
    <property type="expression patterns" value="Expressed in tongue muscle and 103 other cell types or tissues"/>
</dbReference>
<dbReference type="GO" id="GO:0005758">
    <property type="term" value="C:mitochondrial intermembrane space"/>
    <property type="evidence" value="ECO:0000250"/>
    <property type="project" value="UniProtKB"/>
</dbReference>
<dbReference type="GO" id="GO:0005739">
    <property type="term" value="C:mitochondrion"/>
    <property type="evidence" value="ECO:0000250"/>
    <property type="project" value="UniProtKB"/>
</dbReference>
<dbReference type="GO" id="GO:0005507">
    <property type="term" value="F:copper ion binding"/>
    <property type="evidence" value="ECO:0000250"/>
    <property type="project" value="UniProtKB"/>
</dbReference>
<dbReference type="GO" id="GO:0042775">
    <property type="term" value="P:mitochondrial ATP synthesis coupled electron transport"/>
    <property type="evidence" value="ECO:0000318"/>
    <property type="project" value="GO_Central"/>
</dbReference>
<dbReference type="GO" id="GO:0033617">
    <property type="term" value="P:mitochondrial cytochrome c oxidase assembly"/>
    <property type="evidence" value="ECO:0000250"/>
    <property type="project" value="UniProtKB"/>
</dbReference>
<dbReference type="GO" id="GO:0008535">
    <property type="term" value="P:respiratory chain complex IV assembly"/>
    <property type="evidence" value="ECO:0000250"/>
    <property type="project" value="UniProtKB"/>
</dbReference>
<dbReference type="CDD" id="cd00926">
    <property type="entry name" value="Cyt_c_Oxidase_VIb"/>
    <property type="match status" value="1"/>
</dbReference>
<dbReference type="FunFam" id="1.10.10.140:FF:000002">
    <property type="entry name" value="Cytochrome c oxidase assembly factor 6 homolog"/>
    <property type="match status" value="1"/>
</dbReference>
<dbReference type="Gene3D" id="1.10.10.140">
    <property type="entry name" value="Cytochrome c oxidase, subunit VIb"/>
    <property type="match status" value="1"/>
</dbReference>
<dbReference type="InterPro" id="IPR042289">
    <property type="entry name" value="COA6"/>
</dbReference>
<dbReference type="InterPro" id="IPR048280">
    <property type="entry name" value="COX6B-like"/>
</dbReference>
<dbReference type="InterPro" id="IPR036549">
    <property type="entry name" value="CX6/COA6-like_sf"/>
</dbReference>
<dbReference type="PANTHER" id="PTHR46690">
    <property type="entry name" value="CYTOCHROME C OXIDASE ASSEMBLY FACTOR 6 HOMOLOG"/>
    <property type="match status" value="1"/>
</dbReference>
<dbReference type="PANTHER" id="PTHR46690:SF1">
    <property type="entry name" value="CYTOCHROME C OXIDASE ASSEMBLY FACTOR 6 HOMOLOG"/>
    <property type="match status" value="1"/>
</dbReference>
<dbReference type="Pfam" id="PF02297">
    <property type="entry name" value="COX6B"/>
    <property type="match status" value="1"/>
</dbReference>
<dbReference type="SUPFAM" id="SSF47694">
    <property type="entry name" value="Cytochrome c oxidase subunit h"/>
    <property type="match status" value="1"/>
</dbReference>
<dbReference type="PROSITE" id="PS51808">
    <property type="entry name" value="CHCH"/>
    <property type="match status" value="1"/>
</dbReference>
<protein>
    <recommendedName>
        <fullName>Cytochrome c oxidase assembly factor 6 homolog</fullName>
    </recommendedName>
</protein>
<organism>
    <name type="scientific">Bos taurus</name>
    <name type="common">Bovine</name>
    <dbReference type="NCBI Taxonomy" id="9913"/>
    <lineage>
        <taxon>Eukaryota</taxon>
        <taxon>Metazoa</taxon>
        <taxon>Chordata</taxon>
        <taxon>Craniata</taxon>
        <taxon>Vertebrata</taxon>
        <taxon>Euteleostomi</taxon>
        <taxon>Mammalia</taxon>
        <taxon>Eutheria</taxon>
        <taxon>Laurasiatheria</taxon>
        <taxon>Artiodactyla</taxon>
        <taxon>Ruminantia</taxon>
        <taxon>Pecora</taxon>
        <taxon>Bovidae</taxon>
        <taxon>Bovinae</taxon>
        <taxon>Bos</taxon>
    </lineage>
</organism>
<comment type="function">
    <text evidence="1">Involved in the maturation of the mitochondrial respiratory chain complex IV subunit MT-CO2/COX2. Thereby, may regulate early steps of complex IV assembly. Mitochondrial respiratory chain complex IV or cytochrome c oxidase is the component of the respiratory chain that catalyzes the transfer of electrons from intermembrane space cytochrome c to molecular oxygen in the matrix and as a consequence contributes to the proton gradient involved in mitochondrial ATP synthesis. May also be required for efficient formation of respiratory supercomplexes comprised of complexes III and IV.</text>
</comment>
<comment type="subunit">
    <text evidence="1">Found in a complex with TMEM177, COX20, MT-CO2/COX2, COX18, SCO1 and SCO2. Interacts with COA1, MT-CO2/COX2, SCO1, SCO2 and COX20. Interacts with COX20 in a MT-CO2/COX2- and COX18-dependent manner. Interacts with COX16.</text>
</comment>
<comment type="subcellular location">
    <subcellularLocation>
        <location evidence="1">Mitochondrion intermembrane space</location>
    </subcellularLocation>
</comment>
<comment type="similarity">
    <text evidence="3">Belongs to the cytochrome c oxidase subunit 6B family.</text>
</comment>
<keyword id="KW-1015">Disulfide bond</keyword>
<keyword id="KW-0496">Mitochondrion</keyword>
<keyword id="KW-1185">Reference proteome</keyword>
<sequence>MAAPTMKERQACWGARDEYWKCLDENTEDASKCKKLRSSFESSCPQQWIKYFDKRRDYLKFKEKFEAGDFQPSKMTAKS</sequence>
<accession>Q2M2S5</accession>
<gene>
    <name type="primary">COA6</name>
</gene>
<reference key="1">
    <citation type="submission" date="2006-01" db="EMBL/GenBank/DDBJ databases">
        <authorList>
            <consortium name="NIH - Mammalian Gene Collection (MGC) project"/>
        </authorList>
    </citation>
    <scope>NUCLEOTIDE SEQUENCE [LARGE SCALE MRNA]</scope>
    <source>
        <strain>Hereford</strain>
        <tissue>Heart ventricle</tissue>
        <tissue>Thymus</tissue>
    </source>
</reference>
<proteinExistence type="inferred from homology"/>